<organism>
    <name type="scientific">Hordeum vulgare</name>
    <name type="common">Barley</name>
    <dbReference type="NCBI Taxonomy" id="4513"/>
    <lineage>
        <taxon>Eukaryota</taxon>
        <taxon>Viridiplantae</taxon>
        <taxon>Streptophyta</taxon>
        <taxon>Embryophyta</taxon>
        <taxon>Tracheophyta</taxon>
        <taxon>Spermatophyta</taxon>
        <taxon>Magnoliopsida</taxon>
        <taxon>Liliopsida</taxon>
        <taxon>Poales</taxon>
        <taxon>Poaceae</taxon>
        <taxon>BOP clade</taxon>
        <taxon>Pooideae</taxon>
        <taxon>Triticodae</taxon>
        <taxon>Triticeae</taxon>
        <taxon>Hordeinae</taxon>
        <taxon>Hordeum</taxon>
    </lineage>
</organism>
<feature type="chain" id="PRO_0000212706" description="Probable nicotianamine synthase 3">
    <location>
        <begin position="1"/>
        <end position="335"/>
    </location>
</feature>
<protein>
    <recommendedName>
        <fullName>Probable nicotianamine synthase 3</fullName>
        <ecNumber>2.5.1.43</ecNumber>
    </recommendedName>
    <alternativeName>
        <fullName>HvNAS3</fullName>
    </alternativeName>
    <alternativeName>
        <fullName>S-adenosyl-L-methionine:S-adenosyl-L-methionine:S-adenosyl-methionine 3-amino-3-carboxypropyltransferase 3</fullName>
    </alternativeName>
</protein>
<keyword id="KW-0949">S-adenosyl-L-methionine</keyword>
<keyword id="KW-0808">Transferase</keyword>
<name>NAS3_HORVU</name>
<comment type="function">
    <text evidence="1">Synthesizes nicotianamine, a polyamine that is the first intermediate in the synthesis of the phytosiderophores of the mugineic acid type found in gramineae which serves as a sensor for the physiological iron status within the plant, and/or might be involved in the transport of iron.</text>
</comment>
<comment type="catalytic activity">
    <reaction>
        <text>3 S-adenosyl-L-methionine = nicotianamine + 3 S-methyl-5'-thioadenosine + 3 H(+)</text>
        <dbReference type="Rhea" id="RHEA:16481"/>
        <dbReference type="ChEBI" id="CHEBI:15378"/>
        <dbReference type="ChEBI" id="CHEBI:17509"/>
        <dbReference type="ChEBI" id="CHEBI:58249"/>
        <dbReference type="ChEBI" id="CHEBI:59789"/>
        <dbReference type="EC" id="2.5.1.43"/>
    </reaction>
</comment>
<comment type="similarity">
    <text evidence="2">Belongs to the nicotianamine synthase (NAS)-like family.</text>
</comment>
<sequence length="335" mass="36015">MAAQNNNKDVAALVEKITGLHAAIAKLPSLSPSPDVDALFTELVTACVPPSPVDVTKLGPEAQEMREGLIRLCSEAEGKLEAHYSDMLAAFDNPLDHLGIFPYYSNYINLSKLEYELLARYVRRHRPARVAFIGSGPLPFSSFVLAARHLPDTMFDNYDLCGAANDRASKLFRADTDVGARMSFHTADVADLASELAKYDVVFLAALVGMAAEDKAKVIAHLGAHMADGAALVVRSAHGARGFLYPIVDPQDIGRGGFEVLAVCHPDDDVVNSVIIAQKSKEVHADGLGSARGAGRQYARGTVPVVSPPCRFGEMVADVTQNHKRDEFANAEVAF</sequence>
<dbReference type="EC" id="2.5.1.43"/>
<dbReference type="EMBL" id="AB011264">
    <property type="protein sequence ID" value="BAA74581.1"/>
    <property type="molecule type" value="mRNA"/>
</dbReference>
<dbReference type="SMR" id="Q9ZQV8"/>
<dbReference type="BRENDA" id="2.5.1.43">
    <property type="organism ID" value="2687"/>
</dbReference>
<dbReference type="ExpressionAtlas" id="Q9ZQV8">
    <property type="expression patterns" value="differential"/>
</dbReference>
<dbReference type="GO" id="GO:0030410">
    <property type="term" value="F:nicotianamine synthase activity"/>
    <property type="evidence" value="ECO:0007669"/>
    <property type="project" value="UniProtKB-EC"/>
</dbReference>
<dbReference type="GO" id="GO:0030418">
    <property type="term" value="P:nicotianamine biosynthetic process"/>
    <property type="evidence" value="ECO:0007669"/>
    <property type="project" value="InterPro"/>
</dbReference>
<dbReference type="Gene3D" id="3.40.50.150">
    <property type="entry name" value="Vaccinia Virus protein VP39"/>
    <property type="match status" value="1"/>
</dbReference>
<dbReference type="InterPro" id="IPR004298">
    <property type="entry name" value="Nicotian_synth"/>
</dbReference>
<dbReference type="InterPro" id="IPR029063">
    <property type="entry name" value="SAM-dependent_MTases_sf"/>
</dbReference>
<dbReference type="PANTHER" id="PTHR32266:SF29">
    <property type="entry name" value="NICOTIANAMINE SYNTHASE"/>
    <property type="match status" value="1"/>
</dbReference>
<dbReference type="PANTHER" id="PTHR32266">
    <property type="entry name" value="NICOTIANAMINE SYNTHASE 3"/>
    <property type="match status" value="1"/>
</dbReference>
<dbReference type="Pfam" id="PF03059">
    <property type="entry name" value="NAS"/>
    <property type="match status" value="1"/>
</dbReference>
<dbReference type="SUPFAM" id="SSF53335">
    <property type="entry name" value="S-adenosyl-L-methionine-dependent methyltransferases"/>
    <property type="match status" value="1"/>
</dbReference>
<dbReference type="PROSITE" id="PS51142">
    <property type="entry name" value="NAS"/>
    <property type="match status" value="1"/>
</dbReference>
<evidence type="ECO:0000250" key="1"/>
<evidence type="ECO:0000305" key="2"/>
<reference key="1">
    <citation type="journal article" date="1999" name="Plant Physiol.">
        <title>Cloning of nicotianamine synthase genes, novel genes involved in the biosynthesis of phytosiderophores.</title>
        <authorList>
            <person name="Higuchi K."/>
            <person name="Suzuki K."/>
            <person name="Nakanishi H."/>
            <person name="Yamaguchi H."/>
            <person name="Nishizawa N.-K."/>
            <person name="Mori S."/>
        </authorList>
    </citation>
    <scope>NUCLEOTIDE SEQUENCE [MRNA]</scope>
    <source>
        <strain>cv. Ehimehadaka No.1</strain>
        <tissue>Root</tissue>
    </source>
</reference>
<proteinExistence type="evidence at transcript level"/>
<accession>Q9ZQV8</accession>
<gene>
    <name type="primary">NAS3</name>
</gene>